<feature type="chain" id="PRO_0000061949" description="N-acyl-L-amino acid amidohydrolase">
    <location>
        <begin position="1"/>
        <end position="370"/>
    </location>
</feature>
<keyword id="KW-0170">Cobalt</keyword>
<keyword id="KW-0903">Direct protein sequencing</keyword>
<keyword id="KW-0378">Hydrolase</keyword>
<evidence type="ECO:0000305" key="1"/>
<gene>
    <name type="primary">amaA</name>
    <name type="synonym">ama</name>
</gene>
<name>AMAA_GEOSE</name>
<protein>
    <recommendedName>
        <fullName>N-acyl-L-amino acid amidohydrolase</fullName>
        <shortName>L-aminoacylase</shortName>
        <ecNumber>3.5.1.14</ecNumber>
    </recommendedName>
</protein>
<organism>
    <name type="scientific">Geobacillus stearothermophilus</name>
    <name type="common">Bacillus stearothermophilus</name>
    <dbReference type="NCBI Taxonomy" id="1422"/>
    <lineage>
        <taxon>Bacteria</taxon>
        <taxon>Bacillati</taxon>
        <taxon>Bacillota</taxon>
        <taxon>Bacilli</taxon>
        <taxon>Bacillales</taxon>
        <taxon>Anoxybacillaceae</taxon>
        <taxon>Geobacillus</taxon>
    </lineage>
</organism>
<comment type="function">
    <text>Hydrolyzes most efficiently N-acetyl derivatives of aromatic amino acids but is also active on other amino acids. L-stereospecific.</text>
</comment>
<comment type="catalytic activity">
    <reaction>
        <text>an N-acyl-L-amino acid + H2O = an L-alpha-amino acid + a carboxylate</text>
        <dbReference type="Rhea" id="RHEA:15565"/>
        <dbReference type="ChEBI" id="CHEBI:15377"/>
        <dbReference type="ChEBI" id="CHEBI:29067"/>
        <dbReference type="ChEBI" id="CHEBI:59869"/>
        <dbReference type="ChEBI" id="CHEBI:59874"/>
        <dbReference type="EC" id="3.5.1.14"/>
    </reaction>
</comment>
<comment type="catalytic activity">
    <reaction>
        <text>an N-acetyl-L-cysteine-S-conjugate + H2O = an S-substituted L-cysteine + acetate</text>
        <dbReference type="Rhea" id="RHEA:36855"/>
        <dbReference type="ChEBI" id="CHEBI:15377"/>
        <dbReference type="ChEBI" id="CHEBI:30089"/>
        <dbReference type="ChEBI" id="CHEBI:58717"/>
        <dbReference type="ChEBI" id="CHEBI:58718"/>
        <dbReference type="EC" id="3.5.1.14"/>
    </reaction>
</comment>
<comment type="cofactor">
    <cofactor>
        <name>Co(2+)</name>
        <dbReference type="ChEBI" id="CHEBI:48828"/>
    </cofactor>
</comment>
<comment type="subunit">
    <text>Homotetramer.</text>
</comment>
<comment type="similarity">
    <text evidence="1">Belongs to the peptidase M20 family.</text>
</comment>
<accession>P37112</accession>
<reference key="1">
    <citation type="journal article" date="1993" name="Appl. Environ. Microbiol.">
        <title>Gene cloning, sequence analysis, purification, and characterization of a thermostable aminoacylase from Bacillus stearothermophilus.</title>
        <authorList>
            <person name="Sakanyan V."/>
            <person name="Desmarez L."/>
            <person name="Legrain C."/>
            <person name="Charlier D.R.M."/>
            <person name="Mett I."/>
            <person name="Kochikyan A."/>
            <person name="Savchenko A."/>
            <person name="Boyen A."/>
            <person name="Falmagne P."/>
            <person name="Pirard A."/>
            <person name="Glansdorff N."/>
        </authorList>
    </citation>
    <scope>NUCLEOTIDE SEQUENCE [GENOMIC DNA]</scope>
    <scope>PROTEIN SEQUENCE OF 1-10</scope>
    <scope>CHARACTERIZATION</scope>
    <source>
        <strain>NCIMB 8224 / CCM 2186 / NCA C-1235.1 / VKM B-718</strain>
    </source>
</reference>
<reference key="2">
    <citation type="journal article" date="1997" name="Appl. Environ. Microbiol.">
        <title>Two amino acid amidohydrolase genes encoding L-stereospecific carbamoylase and aminoacylase are organized in a common operon in Bacillus stearothermophilus.</title>
        <authorList>
            <person name="Batisse N."/>
            <person name="Weigel P."/>
            <person name="Lecocq M."/>
            <person name="Sakanyan V."/>
        </authorList>
    </citation>
    <scope>NUCLEOTIDE SEQUENCE [GENOMIC DNA]</scope>
    <source>
        <strain>NCIMB 8224 / CCM 2186 / NCA C-1235.1 / VKM B-718</strain>
    </source>
</reference>
<proteinExistence type="evidence at protein level"/>
<sequence>MTKEEIKRLVDEVKTDVIAWRRHLHAHPELSFQEEKTAQFVYETLQSFGHLELSRPTKTSVMARLIGQQPGRVVAIRADMDALPIQEENTFEFASKNPGVMHACGHDGHTAMLLGTAKIFSQLRDDIRGEIRFLFQHAEELFPGGAEEMVQAGVMDGVDVVIGTHLWSPLERGKIGIVYGPMMAAPDRFFIRIIGKGGHGAMPHQTIDAIAIGAQVVTNLQHIVSRYVDPLEPLVLSVTQFVAGTAHNVLPGEVEIQGTVRTFDETLRRTVPQWMERIVKGITEAHGASYEFRFDYGYRPVINYDEGDPRHGGNGVRAVRRRGSGPLETEHGRRRFLRLFAKSARQLFLRRRGQCRKRHRLPAPPPALYD</sequence>
<dbReference type="EC" id="3.5.1.14"/>
<dbReference type="EMBL" id="X74289">
    <property type="protein sequence ID" value="CAA52342.1"/>
    <property type="molecule type" value="Genomic_DNA"/>
</dbReference>
<dbReference type="EMBL" id="Y08753">
    <property type="protein sequence ID" value="CAA70000.1"/>
    <property type="molecule type" value="Genomic_DNA"/>
</dbReference>
<dbReference type="PIR" id="I40358">
    <property type="entry name" value="I40358"/>
</dbReference>
<dbReference type="SMR" id="P37112"/>
<dbReference type="GO" id="GO:0004046">
    <property type="term" value="F:aminoacylase activity"/>
    <property type="evidence" value="ECO:0007669"/>
    <property type="project" value="UniProtKB-EC"/>
</dbReference>
<dbReference type="FunFam" id="3.30.70.360:FF:000014">
    <property type="entry name" value="N-acyl-L-amino acid amidohydrolase"/>
    <property type="match status" value="1"/>
</dbReference>
<dbReference type="Gene3D" id="3.30.70.360">
    <property type="match status" value="1"/>
</dbReference>
<dbReference type="Gene3D" id="3.40.630.10">
    <property type="entry name" value="Zn peptidases"/>
    <property type="match status" value="1"/>
</dbReference>
<dbReference type="InterPro" id="IPR017439">
    <property type="entry name" value="Amidohydrolase"/>
</dbReference>
<dbReference type="InterPro" id="IPR036264">
    <property type="entry name" value="Bact_exopeptidase_dim_dom"/>
</dbReference>
<dbReference type="InterPro" id="IPR002933">
    <property type="entry name" value="Peptidase_M20"/>
</dbReference>
<dbReference type="InterPro" id="IPR011650">
    <property type="entry name" value="Peptidase_M20_dimer"/>
</dbReference>
<dbReference type="NCBIfam" id="TIGR01891">
    <property type="entry name" value="amidohydrolases"/>
    <property type="match status" value="1"/>
</dbReference>
<dbReference type="PANTHER" id="PTHR11014:SF63">
    <property type="entry name" value="METALLOPEPTIDASE, PUTATIVE (AFU_ORTHOLOGUE AFUA_6G09600)-RELATED"/>
    <property type="match status" value="1"/>
</dbReference>
<dbReference type="PANTHER" id="PTHR11014">
    <property type="entry name" value="PEPTIDASE M20 FAMILY MEMBER"/>
    <property type="match status" value="1"/>
</dbReference>
<dbReference type="Pfam" id="PF07687">
    <property type="entry name" value="M20_dimer"/>
    <property type="match status" value="1"/>
</dbReference>
<dbReference type="Pfam" id="PF01546">
    <property type="entry name" value="Peptidase_M20"/>
    <property type="match status" value="1"/>
</dbReference>
<dbReference type="PIRSF" id="PIRSF005962">
    <property type="entry name" value="Pept_M20D_amidohydro"/>
    <property type="match status" value="1"/>
</dbReference>
<dbReference type="SUPFAM" id="SSF55031">
    <property type="entry name" value="Bacterial exopeptidase dimerisation domain"/>
    <property type="match status" value="1"/>
</dbReference>
<dbReference type="SUPFAM" id="SSF53187">
    <property type="entry name" value="Zn-dependent exopeptidases"/>
    <property type="match status" value="1"/>
</dbReference>